<feature type="signal peptide" evidence="2">
    <location>
        <begin position="1"/>
        <end position="20"/>
    </location>
</feature>
<feature type="propeptide" id="PRO_0000414916" evidence="1">
    <location>
        <begin position="21"/>
        <end position="195"/>
    </location>
</feature>
<feature type="chain" id="PRO_0000414917" description="Zinc metalloproteinase-disintegrin-like">
    <location>
        <begin position="196"/>
        <end position="615"/>
    </location>
</feature>
<feature type="domain" description="Peptidase M12B" evidence="4">
    <location>
        <begin position="204"/>
        <end position="400"/>
    </location>
</feature>
<feature type="domain" description="Disintegrin" evidence="3">
    <location>
        <begin position="408"/>
        <end position="494"/>
    </location>
</feature>
<feature type="short sequence motif" description="D/ECD-tripeptide">
    <location>
        <begin position="472"/>
        <end position="474"/>
    </location>
</feature>
<feature type="active site" evidence="4 5">
    <location>
        <position position="341"/>
    </location>
</feature>
<feature type="binding site" evidence="1">
    <location>
        <position position="340"/>
    </location>
    <ligand>
        <name>Zn(2+)</name>
        <dbReference type="ChEBI" id="CHEBI:29105"/>
        <note>catalytic</note>
    </ligand>
</feature>
<feature type="binding site" evidence="1">
    <location>
        <position position="344"/>
    </location>
    <ligand>
        <name>Zn(2+)</name>
        <dbReference type="ChEBI" id="CHEBI:29105"/>
        <note>catalytic</note>
    </ligand>
</feature>
<feature type="binding site" evidence="1">
    <location>
        <position position="350"/>
    </location>
    <ligand>
        <name>Zn(2+)</name>
        <dbReference type="ChEBI" id="CHEBI:29105"/>
        <note>catalytic</note>
    </ligand>
</feature>
<feature type="binding site" evidence="1">
    <location>
        <position position="410"/>
    </location>
    <ligand>
        <name>Ca(2+)</name>
        <dbReference type="ChEBI" id="CHEBI:29108"/>
    </ligand>
</feature>
<feature type="binding site" evidence="1">
    <location>
        <position position="413"/>
    </location>
    <ligand>
        <name>Ca(2+)</name>
        <dbReference type="ChEBI" id="CHEBI:29108"/>
    </ligand>
</feature>
<feature type="binding site" evidence="1">
    <location>
        <position position="415"/>
    </location>
    <ligand>
        <name>Ca(2+)</name>
        <dbReference type="ChEBI" id="CHEBI:29108"/>
    </ligand>
</feature>
<feature type="binding site" evidence="1">
    <location>
        <position position="417"/>
    </location>
    <ligand>
        <name>Ca(2+)</name>
        <dbReference type="ChEBI" id="CHEBI:29108"/>
    </ligand>
</feature>
<feature type="binding site" evidence="1">
    <location>
        <position position="423"/>
    </location>
    <ligand>
        <name>Ca(2+)</name>
        <dbReference type="ChEBI" id="CHEBI:29108"/>
    </ligand>
</feature>
<feature type="disulfide bond" evidence="1">
    <location>
        <begin position="315"/>
        <end position="395"/>
    </location>
</feature>
<feature type="disulfide bond" evidence="1">
    <location>
        <begin position="355"/>
        <end position="379"/>
    </location>
</feature>
<feature type="disulfide bond" evidence="1">
    <location>
        <begin position="357"/>
        <end position="362"/>
    </location>
</feature>
<feature type="disulfide bond" evidence="1">
    <location>
        <begin position="411"/>
        <end position="440"/>
    </location>
</feature>
<feature type="disulfide bond" evidence="1">
    <location>
        <begin position="422"/>
        <end position="435"/>
    </location>
</feature>
<feature type="disulfide bond" evidence="1">
    <location>
        <begin position="424"/>
        <end position="430"/>
    </location>
</feature>
<feature type="disulfide bond" evidence="1">
    <location>
        <begin position="434"/>
        <end position="457"/>
    </location>
</feature>
<feature type="disulfide bond" evidence="1">
    <location>
        <begin position="448"/>
        <end position="454"/>
    </location>
</feature>
<feature type="disulfide bond" evidence="1">
    <location>
        <begin position="453"/>
        <end position="479"/>
    </location>
</feature>
<feature type="disulfide bond" evidence="1">
    <location>
        <begin position="466"/>
        <end position="486"/>
    </location>
</feature>
<feature type="disulfide bond" evidence="1">
    <location>
        <begin position="473"/>
        <end position="505"/>
    </location>
</feature>
<feature type="disulfide bond" evidence="1">
    <location>
        <begin position="498"/>
        <end position="510"/>
    </location>
</feature>
<feature type="disulfide bond" evidence="1">
    <location>
        <begin position="517"/>
        <end position="567"/>
    </location>
</feature>
<feature type="disulfide bond" evidence="1">
    <location>
        <begin position="532"/>
        <end position="576"/>
    </location>
</feature>
<feature type="disulfide bond" evidence="1">
    <location>
        <begin position="545"/>
        <end position="555"/>
    </location>
</feature>
<feature type="disulfide bond" evidence="1">
    <location>
        <begin position="562"/>
        <end position="602"/>
    </location>
</feature>
<feature type="disulfide bond" evidence="1">
    <location>
        <begin position="596"/>
        <end position="608"/>
    </location>
</feature>
<accession>D8VNS0</accession>
<evidence type="ECO:0000250" key="1"/>
<evidence type="ECO:0000255" key="2"/>
<evidence type="ECO:0000255" key="3">
    <source>
        <dbReference type="PROSITE-ProRule" id="PRU00068"/>
    </source>
</evidence>
<evidence type="ECO:0000255" key="4">
    <source>
        <dbReference type="PROSITE-ProRule" id="PRU00276"/>
    </source>
</evidence>
<evidence type="ECO:0000255" key="5">
    <source>
        <dbReference type="PROSITE-ProRule" id="PRU10095"/>
    </source>
</evidence>
<evidence type="ECO:0000269" key="6">
    <source>
    </source>
</evidence>
<evidence type="ECO:0000305" key="7"/>
<organism>
    <name type="scientific">Cerberus rynchops</name>
    <name type="common">Dog-faced water snake</name>
    <dbReference type="NCBI Taxonomy" id="46267"/>
    <lineage>
        <taxon>Eukaryota</taxon>
        <taxon>Metazoa</taxon>
        <taxon>Chordata</taxon>
        <taxon>Craniata</taxon>
        <taxon>Vertebrata</taxon>
        <taxon>Euteleostomi</taxon>
        <taxon>Lepidosauria</taxon>
        <taxon>Squamata</taxon>
        <taxon>Bifurcata</taxon>
        <taxon>Unidentata</taxon>
        <taxon>Episquamata</taxon>
        <taxon>Toxicofera</taxon>
        <taxon>Serpentes</taxon>
        <taxon>Colubroidea</taxon>
        <taxon>Homalopsidae</taxon>
        <taxon>Cerberus</taxon>
    </lineage>
</organism>
<sequence length="615" mass="68956">MIQALLVTICLVGFPHQGSSIILESGNVKDYEVVYPQKIPALPKGGIQRAEPETKYEDTMQYQFKVNGEPVVLHLERNKGLFSEDYSETHYSPDGREITTSPPVQDHCYYHGRIQNDADSTASISACNGLKGRFKHQGETYLIEPLKISDSEAHKIYKSENLEKEDEAPKTCGVTQTSLETDETIKMNFQSANNPEEDYVRKRKYIKLAVVVDNSMYIKYDRNLNDIRSRIYEIVNDVNVFYRLLNIHIALIFIEIWSHQDKINVQPMVRVTLDSFGTWRETDLLPRRSHDNAQLYTNVDFDGPTVGYAYVGSLCKPKHSVAIIQDHTETANMMASTVAHELGHNLGMNHDSGNCICQPTLCVMSETLSSVPFNDFSACSRVDHRNYLIRDLPQCILNKPLRTDIVAPAVCGNNFVEVGGECDCGSPQDCQSTCCDAATCRLRDGAQCDTEECCEQCRFRRAGTVCRAAKDDCDVAEFCTGRTADCPMDGLQRNGEPCQHNQGYCYNGKCPIMTNQCIALWGPDATVSQDGCFHFNENGQGDLYCRRENGVNIQCEPQDNKCGRLFCVQSTSTVQCNYRSSATDPDYGMVAIGTKCGDGRVCNNNRFCVDIRIAY</sequence>
<comment type="function">
    <text evidence="6">Snake venom zinc metalloprotease that may induce platelet aggregation.</text>
</comment>
<comment type="cofactor">
    <cofactor evidence="1">
        <name>Zn(2+)</name>
        <dbReference type="ChEBI" id="CHEBI:29105"/>
    </cofactor>
    <text evidence="1">Binds 1 zinc ion per subunit.</text>
</comment>
<comment type="subunit">
    <text evidence="1">Monomer.</text>
</comment>
<comment type="subcellular location">
    <subcellularLocation>
        <location>Secreted</location>
    </subcellularLocation>
</comment>
<comment type="tissue specificity">
    <text>Expressed by the venom gland.</text>
</comment>
<comment type="similarity">
    <text evidence="7">Belongs to the venom metalloproteinase (M12B) family. P-III subfamily. P-IIIa sub-subfamily.</text>
</comment>
<proteinExistence type="evidence at protein level"/>
<keyword id="KW-0106">Calcium</keyword>
<keyword id="KW-1015">Disulfide bond</keyword>
<keyword id="KW-1199">Hemostasis impairing toxin</keyword>
<keyword id="KW-0378">Hydrolase</keyword>
<keyword id="KW-0479">Metal-binding</keyword>
<keyword id="KW-0482">Metalloprotease</keyword>
<keyword id="KW-1202">Platelet aggregation activating toxin</keyword>
<keyword id="KW-0645">Protease</keyword>
<keyword id="KW-0964">Secreted</keyword>
<keyword id="KW-0732">Signal</keyword>
<keyword id="KW-0800">Toxin</keyword>
<keyword id="KW-0862">Zinc</keyword>
<keyword id="KW-0865">Zymogen</keyword>
<reference key="1">
    <citation type="journal article" date="2010" name="J. Proteome Res.">
        <title>Identification of a novel family of snake venom proteins Veficolins from Cerberus rynchops using a venom gland transcriptomics and proteomics approach.</title>
        <authorList>
            <person name="Ompraba G."/>
            <person name="Chapeaurouge A."/>
            <person name="Doley R."/>
            <person name="Devi K.R."/>
            <person name="Padmanaban P."/>
            <person name="Venkatraman C."/>
            <person name="Velmurugan D."/>
            <person name="Lin Q."/>
            <person name="Kini R.M."/>
        </authorList>
    </citation>
    <scope>NUCLEOTIDE SEQUENCE [MRNA]</scope>
    <scope>IDENTIFICATION BY MASS SPECTROMETRY</scope>
    <scope>FUNCTION</scope>
    <source>
        <tissue>Venom</tissue>
        <tissue>Venom gland</tissue>
    </source>
</reference>
<protein>
    <recommendedName>
        <fullName>Zinc metalloproteinase-disintegrin-like</fullName>
        <ecNumber>3.4.24.-</ecNumber>
    </recommendedName>
    <alternativeName>
        <fullName>Snake venom metalloproteinase</fullName>
        <shortName>SVMP</shortName>
    </alternativeName>
</protein>
<name>VM3_CERRY</name>
<dbReference type="EC" id="3.4.24.-"/>
<dbReference type="EMBL" id="GU065316">
    <property type="protein sequence ID" value="ADJ51055.1"/>
    <property type="molecule type" value="mRNA"/>
</dbReference>
<dbReference type="SMR" id="D8VNS0"/>
<dbReference type="MEROPS" id="M12.315"/>
<dbReference type="TopDownProteomics" id="D8VNS0"/>
<dbReference type="GO" id="GO:0005576">
    <property type="term" value="C:extracellular region"/>
    <property type="evidence" value="ECO:0007669"/>
    <property type="project" value="UniProtKB-SubCell"/>
</dbReference>
<dbReference type="GO" id="GO:0005886">
    <property type="term" value="C:plasma membrane"/>
    <property type="evidence" value="ECO:0007669"/>
    <property type="project" value="TreeGrafter"/>
</dbReference>
<dbReference type="GO" id="GO:0046872">
    <property type="term" value="F:metal ion binding"/>
    <property type="evidence" value="ECO:0007669"/>
    <property type="project" value="UniProtKB-KW"/>
</dbReference>
<dbReference type="GO" id="GO:0004222">
    <property type="term" value="F:metalloendopeptidase activity"/>
    <property type="evidence" value="ECO:0007669"/>
    <property type="project" value="InterPro"/>
</dbReference>
<dbReference type="GO" id="GO:0090729">
    <property type="term" value="F:toxin activity"/>
    <property type="evidence" value="ECO:0007669"/>
    <property type="project" value="UniProtKB-KW"/>
</dbReference>
<dbReference type="GO" id="GO:0006508">
    <property type="term" value="P:proteolysis"/>
    <property type="evidence" value="ECO:0007669"/>
    <property type="project" value="UniProtKB-KW"/>
</dbReference>
<dbReference type="CDD" id="cd04269">
    <property type="entry name" value="ZnMc_adamalysin_II_like"/>
    <property type="match status" value="1"/>
</dbReference>
<dbReference type="FunFam" id="3.40.390.10:FF:000002">
    <property type="entry name" value="Disintegrin and metalloproteinase domain-containing protein 22"/>
    <property type="match status" value="1"/>
</dbReference>
<dbReference type="FunFam" id="4.10.70.10:FF:000001">
    <property type="entry name" value="Disintegrin and metalloproteinase domain-containing protein 22"/>
    <property type="match status" value="1"/>
</dbReference>
<dbReference type="Gene3D" id="3.40.390.10">
    <property type="entry name" value="Collagenase (Catalytic Domain)"/>
    <property type="match status" value="1"/>
</dbReference>
<dbReference type="Gene3D" id="4.10.70.10">
    <property type="entry name" value="Disintegrin domain"/>
    <property type="match status" value="1"/>
</dbReference>
<dbReference type="InterPro" id="IPR006586">
    <property type="entry name" value="ADAM_Cys-rich"/>
</dbReference>
<dbReference type="InterPro" id="IPR001762">
    <property type="entry name" value="Disintegrin_dom"/>
</dbReference>
<dbReference type="InterPro" id="IPR036436">
    <property type="entry name" value="Disintegrin_dom_sf"/>
</dbReference>
<dbReference type="InterPro" id="IPR024079">
    <property type="entry name" value="MetalloPept_cat_dom_sf"/>
</dbReference>
<dbReference type="InterPro" id="IPR001590">
    <property type="entry name" value="Peptidase_M12B"/>
</dbReference>
<dbReference type="InterPro" id="IPR002870">
    <property type="entry name" value="Peptidase_M12B_N"/>
</dbReference>
<dbReference type="InterPro" id="IPR034027">
    <property type="entry name" value="Reprolysin_adamalysin"/>
</dbReference>
<dbReference type="PANTHER" id="PTHR11905">
    <property type="entry name" value="ADAM A DISINTEGRIN AND METALLOPROTEASE DOMAIN"/>
    <property type="match status" value="1"/>
</dbReference>
<dbReference type="PANTHER" id="PTHR11905:SF32">
    <property type="entry name" value="DISINTEGRIN AND METALLOPROTEINASE DOMAIN-CONTAINING PROTEIN 28"/>
    <property type="match status" value="1"/>
</dbReference>
<dbReference type="Pfam" id="PF08516">
    <property type="entry name" value="ADAM_CR"/>
    <property type="match status" value="1"/>
</dbReference>
<dbReference type="Pfam" id="PF00200">
    <property type="entry name" value="Disintegrin"/>
    <property type="match status" value="1"/>
</dbReference>
<dbReference type="Pfam" id="PF01562">
    <property type="entry name" value="Pep_M12B_propep"/>
    <property type="match status" value="1"/>
</dbReference>
<dbReference type="Pfam" id="PF01421">
    <property type="entry name" value="Reprolysin"/>
    <property type="match status" value="1"/>
</dbReference>
<dbReference type="PRINTS" id="PR00289">
    <property type="entry name" value="DISINTEGRIN"/>
</dbReference>
<dbReference type="SMART" id="SM00608">
    <property type="entry name" value="ACR"/>
    <property type="match status" value="1"/>
</dbReference>
<dbReference type="SMART" id="SM00050">
    <property type="entry name" value="DISIN"/>
    <property type="match status" value="1"/>
</dbReference>
<dbReference type="SUPFAM" id="SSF57552">
    <property type="entry name" value="Blood coagulation inhibitor (disintegrin)"/>
    <property type="match status" value="1"/>
</dbReference>
<dbReference type="SUPFAM" id="SSF55486">
    <property type="entry name" value="Metalloproteases ('zincins'), catalytic domain"/>
    <property type="match status" value="1"/>
</dbReference>
<dbReference type="PROSITE" id="PS50215">
    <property type="entry name" value="ADAM_MEPRO"/>
    <property type="match status" value="1"/>
</dbReference>
<dbReference type="PROSITE" id="PS50214">
    <property type="entry name" value="DISINTEGRIN_2"/>
    <property type="match status" value="1"/>
</dbReference>
<dbReference type="PROSITE" id="PS00142">
    <property type="entry name" value="ZINC_PROTEASE"/>
    <property type="match status" value="1"/>
</dbReference>